<dbReference type="EMBL" id="AY093656">
    <property type="protein sequence ID" value="AAM19082.1"/>
    <property type="molecule type" value="mRNA"/>
</dbReference>
<dbReference type="RefSeq" id="XP_046918867.1">
    <property type="nucleotide sequence ID" value="XM_047062911.1"/>
</dbReference>
<dbReference type="SMR" id="Q86R84"/>
<dbReference type="Allergome" id="301">
    <property type="allergen name" value="Der f 18"/>
</dbReference>
<dbReference type="Allergome" id="3254">
    <property type="allergen name" value="Der f 18.0101"/>
</dbReference>
<dbReference type="CAZy" id="GH18">
    <property type="family name" value="Glycoside Hydrolase Family 18"/>
</dbReference>
<dbReference type="GeneID" id="124499057"/>
<dbReference type="OrthoDB" id="6498521at2759"/>
<dbReference type="GO" id="GO:0005576">
    <property type="term" value="C:extracellular region"/>
    <property type="evidence" value="ECO:0000250"/>
    <property type="project" value="UniProtKB"/>
</dbReference>
<dbReference type="GO" id="GO:0008061">
    <property type="term" value="F:chitin binding"/>
    <property type="evidence" value="ECO:0000250"/>
    <property type="project" value="UniProtKB"/>
</dbReference>
<dbReference type="GO" id="GO:0004568">
    <property type="term" value="F:chitinase activity"/>
    <property type="evidence" value="ECO:0007669"/>
    <property type="project" value="TreeGrafter"/>
</dbReference>
<dbReference type="GO" id="GO:0005975">
    <property type="term" value="P:carbohydrate metabolic process"/>
    <property type="evidence" value="ECO:0007669"/>
    <property type="project" value="InterPro"/>
</dbReference>
<dbReference type="GO" id="GO:0006032">
    <property type="term" value="P:chitin catabolic process"/>
    <property type="evidence" value="ECO:0007669"/>
    <property type="project" value="TreeGrafter"/>
</dbReference>
<dbReference type="Gene3D" id="3.10.50.10">
    <property type="match status" value="1"/>
</dbReference>
<dbReference type="Gene3D" id="2.170.140.10">
    <property type="entry name" value="Chitin binding domain"/>
    <property type="match status" value="1"/>
</dbReference>
<dbReference type="Gene3D" id="3.20.20.80">
    <property type="entry name" value="Glycosidases"/>
    <property type="match status" value="1"/>
</dbReference>
<dbReference type="InterPro" id="IPR011583">
    <property type="entry name" value="Chitinase_II/V-like_cat"/>
</dbReference>
<dbReference type="InterPro" id="IPR029070">
    <property type="entry name" value="Chitinase_insertion_sf"/>
</dbReference>
<dbReference type="InterPro" id="IPR001223">
    <property type="entry name" value="Glyco_hydro18_cat"/>
</dbReference>
<dbReference type="InterPro" id="IPR017853">
    <property type="entry name" value="Glycoside_hydrolase_SF"/>
</dbReference>
<dbReference type="InterPro" id="IPR050314">
    <property type="entry name" value="Glycosyl_Hydrlase_18"/>
</dbReference>
<dbReference type="PANTHER" id="PTHR11177">
    <property type="entry name" value="CHITINASE"/>
    <property type="match status" value="1"/>
</dbReference>
<dbReference type="PANTHER" id="PTHR11177:SF360">
    <property type="entry name" value="CHITINASE 4-RELATED"/>
    <property type="match status" value="1"/>
</dbReference>
<dbReference type="Pfam" id="PF00704">
    <property type="entry name" value="Glyco_hydro_18"/>
    <property type="match status" value="1"/>
</dbReference>
<dbReference type="SMART" id="SM00636">
    <property type="entry name" value="Glyco_18"/>
    <property type="match status" value="1"/>
</dbReference>
<dbReference type="SUPFAM" id="SSF51445">
    <property type="entry name" value="(Trans)glycosidases"/>
    <property type="match status" value="1"/>
</dbReference>
<dbReference type="SUPFAM" id="SSF54556">
    <property type="entry name" value="Chitinase insertion domain"/>
    <property type="match status" value="1"/>
</dbReference>
<dbReference type="PROSITE" id="PS51910">
    <property type="entry name" value="GH18_2"/>
    <property type="match status" value="1"/>
</dbReference>
<accession>Q86R84</accession>
<comment type="function">
    <text evidence="1">Probably a non-catalytic chitinase-like protein, which binds to insoluble chitin and enhances the activity of the catalytic chitinases. Has weak chitin-binding activity.</text>
</comment>
<comment type="subcellular location">
    <subcellularLocation>
        <location evidence="1">Secreted</location>
    </subcellularLocation>
</comment>
<comment type="tissue specificity">
    <text evidence="5">Expressed in the upper digestive tract. Staining is observed in the ventriculus, and in very rare individuals, also in the intestine or esophagus. No expression in fecal pellets neither inside the rectum nor defecated outside of the body.</text>
</comment>
<comment type="allergen">
    <text evidence="5">Causes an allergic reaction in human. Natural protein binds to IgE in 54% of the 24 patients from the Western USA tested allergic to American house dust mite (HDM). Causes an allergic reaction in dog. Natural protein binds to IgE in 57% of the 21 dogs with atopic dermatitis tested allergic to American HDM. In the intradermal tests, the natural protein produces positive reactions in 37% of the 19 dogs with atopic dermatitis tested allergic to American HDM. Binds to IgE in 77% of the 35 dogs with putative atopic dermatitis tested allergic to American HDM.</text>
</comment>
<comment type="similarity">
    <text evidence="7">Belongs to the glycosyl hydrolase 18 family. Chitinase class II subfamily.</text>
</comment>
<comment type="caution">
    <text evidence="1">Although it belongs to the glycosyl hydrolase 18 family, Ser-148 is present instead of the conserved Glu which is an active site residue. Therefore this protein may lack chitinase activity.</text>
</comment>
<keyword id="KW-0020">Allergen</keyword>
<keyword id="KW-0147">Chitin-binding</keyword>
<keyword id="KW-0903">Direct protein sequencing</keyword>
<keyword id="KW-1015">Disulfide bond</keyword>
<keyword id="KW-0325">Glycoprotein</keyword>
<keyword id="KW-0964">Secreted</keyword>
<keyword id="KW-0732">Signal</keyword>
<feature type="signal peptide" evidence="5">
    <location>
        <begin position="1"/>
        <end position="25"/>
    </location>
</feature>
<feature type="chain" id="PRO_5004300467" description="Chitinase-like mite allergen Der f 18.0101" evidence="8">
    <location>
        <begin position="26"/>
        <end position="462"/>
    </location>
</feature>
<feature type="domain" description="GH18" evidence="4">
    <location>
        <begin position="29"/>
        <end position="378"/>
    </location>
</feature>
<feature type="domain" description="Chitin-binding type-2" evidence="2">
    <location>
        <begin position="404"/>
        <end position="462"/>
    </location>
</feature>
<feature type="glycosylation site" description="N-linked (GlcNAc...) asparagine" evidence="3">
    <location>
        <position position="338"/>
    </location>
</feature>
<feature type="disulfide bond" evidence="4">
    <location>
        <begin position="33"/>
        <end position="58"/>
    </location>
</feature>
<feature type="disulfide bond" evidence="2">
    <location>
        <begin position="439"/>
        <end position="453"/>
    </location>
</feature>
<feature type="sequence conflict" description="In Ref. 1; AA sequence." evidence="7" ref="1">
    <original>Y</original>
    <variation>YY</variation>
    <location>
        <position position="190"/>
    </location>
</feature>
<feature type="sequence conflict" description="In Ref. 1; AA sequence." evidence="7" ref="1">
    <location>
        <position position="386"/>
    </location>
</feature>
<name>CHL18_DERFA</name>
<reference evidence="9" key="1">
    <citation type="journal article" date="2003" name="J. Allergy Clin. Immunol.">
        <title>Identification, characterization, and cloning of a complementary DNA encoding a 60-kd house dust mite allergen (Der f 18) for human beings and dogs.</title>
        <authorList>
            <person name="Weber E."/>
            <person name="Hunter S."/>
            <person name="Stedman K."/>
            <person name="Dreitz S."/>
            <person name="Olivry T."/>
            <person name="Hillier A."/>
            <person name="McCall C."/>
        </authorList>
    </citation>
    <scope>NUCLEOTIDE SEQUENCE [MRNA]</scope>
    <scope>PROTEIN SEQUENCE OF 26-48; 54-73; 88-101; 112-124; 146-153; 156-161; 175-205; 208-226; 266-274; 281-298 AND 356-393</scope>
    <scope>TISSUE SPECIFICITY</scope>
    <scope>ALLERGEN</scope>
</reference>
<sequence>MTRFSLTVLAVLAACFGSNIRPNVATLEPKTVCYYESWVHWRQGEGKMDPEDIDTSLCTHIVYSYFGIDAATHEIKLLDEYLMKDLHDMEHFTQHKGNAKAMIAVGGSTMSDQFSKTAAVEHYRETFVVSTVDLMTRYGFDGVMIDWSGMQAKDSDNFIKLLDKFDEKFAHTSFVMGVTLPATIASYDNYNIPAISNYVDFMNVLSLDYTGSWAHTVGHASPFPEQLKTLEAYHKRGAPRHKMVMAVPFYARTWILEKMNKQDIGDKASGPGPRGQFTQTDGFLSYNELCVQIQAETNAFTITRDHDNTAIYAVYVHSNHAEWISFEDRHTLGEKAKNITQQGYAGMSVYTLSNEDVHGVCGDKNPLLHAIQSNYYHGVVTEPTVVTLPPVTHTTEHVTDIPGVFHCHEEGFFRDKTYCATYYECKKGDFGLEKTVHHCANHLQAFDEVSRTCIDHTKIPGC</sequence>
<proteinExistence type="evidence at protein level"/>
<protein>
    <recommendedName>
        <fullName evidence="7">Chitinase-like mite allergen Der f 18.0101</fullName>
    </recommendedName>
    <alternativeName>
        <fullName evidence="6">60 kDa allergen</fullName>
    </alternativeName>
    <alternativeName>
        <fullName evidence="6">60 kDa chitinase homolog</fullName>
    </alternativeName>
    <alternativeName>
        <fullName evidence="6">Allergen Der f 18</fullName>
    </alternativeName>
    <allergenName evidence="7">Der f 18.0101</allergenName>
</protein>
<organism evidence="9">
    <name type="scientific">Dermatophagoides farinae</name>
    <name type="common">American house dust mite</name>
    <dbReference type="NCBI Taxonomy" id="6954"/>
    <lineage>
        <taxon>Eukaryota</taxon>
        <taxon>Metazoa</taxon>
        <taxon>Ecdysozoa</taxon>
        <taxon>Arthropoda</taxon>
        <taxon>Chelicerata</taxon>
        <taxon>Arachnida</taxon>
        <taxon>Acari</taxon>
        <taxon>Acariformes</taxon>
        <taxon>Sarcoptiformes</taxon>
        <taxon>Astigmata</taxon>
        <taxon>Psoroptidia</taxon>
        <taxon>Analgoidea</taxon>
        <taxon>Pyroglyphidae</taxon>
        <taxon>Dermatophagoidinae</taxon>
        <taxon>Dermatophagoides</taxon>
    </lineage>
</organism>
<evidence type="ECO:0000250" key="1">
    <source>
        <dbReference type="UniProtKB" id="Q4JK71"/>
    </source>
</evidence>
<evidence type="ECO:0000255" key="2">
    <source>
        <dbReference type="PROSITE-ProRule" id="PRU00144"/>
    </source>
</evidence>
<evidence type="ECO:0000255" key="3">
    <source>
        <dbReference type="PROSITE-ProRule" id="PRU00498"/>
    </source>
</evidence>
<evidence type="ECO:0000255" key="4">
    <source>
        <dbReference type="PROSITE-ProRule" id="PRU01258"/>
    </source>
</evidence>
<evidence type="ECO:0000269" key="5">
    <source>
    </source>
</evidence>
<evidence type="ECO:0000303" key="6">
    <source>
    </source>
</evidence>
<evidence type="ECO:0000305" key="7"/>
<evidence type="ECO:0000305" key="8">
    <source>
    </source>
</evidence>
<evidence type="ECO:0000312" key="9">
    <source>
        <dbReference type="EMBL" id="AAM19082.1"/>
    </source>
</evidence>